<protein>
    <recommendedName>
        <fullName>Uncharacterized protein R13</fullName>
    </recommendedName>
</protein>
<organism>
    <name type="scientific">Acanthamoeba polyphaga mimivirus</name>
    <name type="common">APMV</name>
    <dbReference type="NCBI Taxonomy" id="212035"/>
    <lineage>
        <taxon>Viruses</taxon>
        <taxon>Varidnaviria</taxon>
        <taxon>Bamfordvirae</taxon>
        <taxon>Nucleocytoviricota</taxon>
        <taxon>Megaviricetes</taxon>
        <taxon>Imitervirales</taxon>
        <taxon>Mimiviridae</taxon>
        <taxon>Megamimivirinae</taxon>
        <taxon>Mimivirus</taxon>
        <taxon>Mimivirus bradfordmassiliense</taxon>
    </lineage>
</organism>
<keyword id="KW-1185">Reference proteome</keyword>
<reference key="1">
    <citation type="journal article" date="2004" name="Science">
        <title>The 1.2-megabase genome sequence of Mimivirus.</title>
        <authorList>
            <person name="Raoult D."/>
            <person name="Audic S."/>
            <person name="Robert C."/>
            <person name="Abergel C."/>
            <person name="Renesto P."/>
            <person name="Ogata H."/>
            <person name="La Scola B."/>
            <person name="Susan M."/>
            <person name="Claverie J.-M."/>
        </authorList>
    </citation>
    <scope>NUCLEOTIDE SEQUENCE [LARGE SCALE GENOMIC DNA]</scope>
    <source>
        <strain>Rowbotham-Bradford</strain>
    </source>
</reference>
<proteinExistence type="predicted"/>
<dbReference type="EMBL" id="AY653733">
    <property type="protein sequence ID" value="AAV50288.1"/>
    <property type="molecule type" value="Genomic_DNA"/>
</dbReference>
<dbReference type="KEGG" id="vg:9924587"/>
<dbReference type="Proteomes" id="UP000001134">
    <property type="component" value="Genome"/>
</dbReference>
<gene>
    <name type="ordered locus">MIMI_R13</name>
</gene>
<name>YR013_MIMIV</name>
<accession>Q5UP85</accession>
<sequence length="183" mass="21481">MEYLNLYKHLKKFIDSENEIIIDISENYPGLRFDINNKSGINLMIALADLSYVINHANQLKYANLLSQFRYNLFLDLKFLNNELKCNEFIDNIINQIPNNIQDYLLEFKNKNYSTDELSYIDNCDLKLKLMKKSFDEIASLSTHSQSVIELYCRIIYNDPSSFDFSVNGITLPNLKKFSNDFL</sequence>
<feature type="chain" id="PRO_0000253256" description="Uncharacterized protein R13">
    <location>
        <begin position="1"/>
        <end position="183"/>
    </location>
</feature>
<organismHost>
    <name type="scientific">Acanthamoeba polyphaga</name>
    <name type="common">Amoeba</name>
    <dbReference type="NCBI Taxonomy" id="5757"/>
</organismHost>